<reference key="1">
    <citation type="journal article" date="2002" name="Oncogene">
        <title>RASSF3 and NORE1: identification and cloning of two human homologues of the putative tumor suppressor gene RASSF1.</title>
        <authorList>
            <person name="Tommasi S."/>
            <person name="Dammann R."/>
            <person name="Jin S.-G."/>
            <person name="Zhang X.-F."/>
            <person name="Avruch J."/>
            <person name="Pfeifer G.P."/>
        </authorList>
    </citation>
    <scope>NUCLEOTIDE SEQUENCE [MRNA]</scope>
    <source>
        <strain>C57BL/6J</strain>
    </source>
</reference>
<reference key="2">
    <citation type="journal article" date="2005" name="Science">
        <title>The transcriptional landscape of the mammalian genome.</title>
        <authorList>
            <person name="Carninci P."/>
            <person name="Kasukawa T."/>
            <person name="Katayama S."/>
            <person name="Gough J."/>
            <person name="Frith M.C."/>
            <person name="Maeda N."/>
            <person name="Oyama R."/>
            <person name="Ravasi T."/>
            <person name="Lenhard B."/>
            <person name="Wells C."/>
            <person name="Kodzius R."/>
            <person name="Shimokawa K."/>
            <person name="Bajic V.B."/>
            <person name="Brenner S.E."/>
            <person name="Batalov S."/>
            <person name="Forrest A.R."/>
            <person name="Zavolan M."/>
            <person name="Davis M.J."/>
            <person name="Wilming L.G."/>
            <person name="Aidinis V."/>
            <person name="Allen J.E."/>
            <person name="Ambesi-Impiombato A."/>
            <person name="Apweiler R."/>
            <person name="Aturaliya R.N."/>
            <person name="Bailey T.L."/>
            <person name="Bansal M."/>
            <person name="Baxter L."/>
            <person name="Beisel K.W."/>
            <person name="Bersano T."/>
            <person name="Bono H."/>
            <person name="Chalk A.M."/>
            <person name="Chiu K.P."/>
            <person name="Choudhary V."/>
            <person name="Christoffels A."/>
            <person name="Clutterbuck D.R."/>
            <person name="Crowe M.L."/>
            <person name="Dalla E."/>
            <person name="Dalrymple B.P."/>
            <person name="de Bono B."/>
            <person name="Della Gatta G."/>
            <person name="di Bernardo D."/>
            <person name="Down T."/>
            <person name="Engstrom P."/>
            <person name="Fagiolini M."/>
            <person name="Faulkner G."/>
            <person name="Fletcher C.F."/>
            <person name="Fukushima T."/>
            <person name="Furuno M."/>
            <person name="Futaki S."/>
            <person name="Gariboldi M."/>
            <person name="Georgii-Hemming P."/>
            <person name="Gingeras T.R."/>
            <person name="Gojobori T."/>
            <person name="Green R.E."/>
            <person name="Gustincich S."/>
            <person name="Harbers M."/>
            <person name="Hayashi Y."/>
            <person name="Hensch T.K."/>
            <person name="Hirokawa N."/>
            <person name="Hill D."/>
            <person name="Huminiecki L."/>
            <person name="Iacono M."/>
            <person name="Ikeo K."/>
            <person name="Iwama A."/>
            <person name="Ishikawa T."/>
            <person name="Jakt M."/>
            <person name="Kanapin A."/>
            <person name="Katoh M."/>
            <person name="Kawasawa Y."/>
            <person name="Kelso J."/>
            <person name="Kitamura H."/>
            <person name="Kitano H."/>
            <person name="Kollias G."/>
            <person name="Krishnan S.P."/>
            <person name="Kruger A."/>
            <person name="Kummerfeld S.K."/>
            <person name="Kurochkin I.V."/>
            <person name="Lareau L.F."/>
            <person name="Lazarevic D."/>
            <person name="Lipovich L."/>
            <person name="Liu J."/>
            <person name="Liuni S."/>
            <person name="McWilliam S."/>
            <person name="Madan Babu M."/>
            <person name="Madera M."/>
            <person name="Marchionni L."/>
            <person name="Matsuda H."/>
            <person name="Matsuzawa S."/>
            <person name="Miki H."/>
            <person name="Mignone F."/>
            <person name="Miyake S."/>
            <person name="Morris K."/>
            <person name="Mottagui-Tabar S."/>
            <person name="Mulder N."/>
            <person name="Nakano N."/>
            <person name="Nakauchi H."/>
            <person name="Ng P."/>
            <person name="Nilsson R."/>
            <person name="Nishiguchi S."/>
            <person name="Nishikawa S."/>
            <person name="Nori F."/>
            <person name="Ohara O."/>
            <person name="Okazaki Y."/>
            <person name="Orlando V."/>
            <person name="Pang K.C."/>
            <person name="Pavan W.J."/>
            <person name="Pavesi G."/>
            <person name="Pesole G."/>
            <person name="Petrovsky N."/>
            <person name="Piazza S."/>
            <person name="Reed J."/>
            <person name="Reid J.F."/>
            <person name="Ring B.Z."/>
            <person name="Ringwald M."/>
            <person name="Rost B."/>
            <person name="Ruan Y."/>
            <person name="Salzberg S.L."/>
            <person name="Sandelin A."/>
            <person name="Schneider C."/>
            <person name="Schoenbach C."/>
            <person name="Sekiguchi K."/>
            <person name="Semple C.A."/>
            <person name="Seno S."/>
            <person name="Sessa L."/>
            <person name="Sheng Y."/>
            <person name="Shibata Y."/>
            <person name="Shimada H."/>
            <person name="Shimada K."/>
            <person name="Silva D."/>
            <person name="Sinclair B."/>
            <person name="Sperling S."/>
            <person name="Stupka E."/>
            <person name="Sugiura K."/>
            <person name="Sultana R."/>
            <person name="Takenaka Y."/>
            <person name="Taki K."/>
            <person name="Tammoja K."/>
            <person name="Tan S.L."/>
            <person name="Tang S."/>
            <person name="Taylor M.S."/>
            <person name="Tegner J."/>
            <person name="Teichmann S.A."/>
            <person name="Ueda H.R."/>
            <person name="van Nimwegen E."/>
            <person name="Verardo R."/>
            <person name="Wei C.L."/>
            <person name="Yagi K."/>
            <person name="Yamanishi H."/>
            <person name="Zabarovsky E."/>
            <person name="Zhu S."/>
            <person name="Zimmer A."/>
            <person name="Hide W."/>
            <person name="Bult C."/>
            <person name="Grimmond S.M."/>
            <person name="Teasdale R.D."/>
            <person name="Liu E.T."/>
            <person name="Brusic V."/>
            <person name="Quackenbush J."/>
            <person name="Wahlestedt C."/>
            <person name="Mattick J.S."/>
            <person name="Hume D.A."/>
            <person name="Kai C."/>
            <person name="Sasaki D."/>
            <person name="Tomaru Y."/>
            <person name="Fukuda S."/>
            <person name="Kanamori-Katayama M."/>
            <person name="Suzuki M."/>
            <person name="Aoki J."/>
            <person name="Arakawa T."/>
            <person name="Iida J."/>
            <person name="Imamura K."/>
            <person name="Itoh M."/>
            <person name="Kato T."/>
            <person name="Kawaji H."/>
            <person name="Kawagashira N."/>
            <person name="Kawashima T."/>
            <person name="Kojima M."/>
            <person name="Kondo S."/>
            <person name="Konno H."/>
            <person name="Nakano K."/>
            <person name="Ninomiya N."/>
            <person name="Nishio T."/>
            <person name="Okada M."/>
            <person name="Plessy C."/>
            <person name="Shibata K."/>
            <person name="Shiraki T."/>
            <person name="Suzuki S."/>
            <person name="Tagami M."/>
            <person name="Waki K."/>
            <person name="Watahiki A."/>
            <person name="Okamura-Oho Y."/>
            <person name="Suzuki H."/>
            <person name="Kawai J."/>
            <person name="Hayashizaki Y."/>
        </authorList>
    </citation>
    <scope>NUCLEOTIDE SEQUENCE [LARGE SCALE MRNA]</scope>
    <source>
        <strain>NOD</strain>
    </source>
</reference>
<reference key="3">
    <citation type="journal article" date="2004" name="Genome Res.">
        <title>The status, quality, and expansion of the NIH full-length cDNA project: the Mammalian Gene Collection (MGC).</title>
        <authorList>
            <consortium name="The MGC Project Team"/>
        </authorList>
    </citation>
    <scope>NUCLEOTIDE SEQUENCE [LARGE SCALE MRNA]</scope>
    <source>
        <tissue>Mammary tumor</tissue>
    </source>
</reference>
<organism>
    <name type="scientific">Mus musculus</name>
    <name type="common">Mouse</name>
    <dbReference type="NCBI Taxonomy" id="10090"/>
    <lineage>
        <taxon>Eukaryota</taxon>
        <taxon>Metazoa</taxon>
        <taxon>Chordata</taxon>
        <taxon>Craniata</taxon>
        <taxon>Vertebrata</taxon>
        <taxon>Euteleostomi</taxon>
        <taxon>Mammalia</taxon>
        <taxon>Eutheria</taxon>
        <taxon>Euarchontoglires</taxon>
        <taxon>Glires</taxon>
        <taxon>Rodentia</taxon>
        <taxon>Myomorpha</taxon>
        <taxon>Muroidea</taxon>
        <taxon>Muridae</taxon>
        <taxon>Murinae</taxon>
        <taxon>Mus</taxon>
        <taxon>Mus</taxon>
    </lineage>
</organism>
<comment type="subcellular location">
    <subcellularLocation>
        <location evidence="1">Cytoplasm</location>
    </subcellularLocation>
    <subcellularLocation>
        <location evidence="1">Cytoplasm</location>
        <location evidence="1">Cytoskeleton</location>
    </subcellularLocation>
    <text evidence="1">Localized to microtubules in vascular endothelial cells.</text>
</comment>
<proteinExistence type="evidence at transcript level"/>
<protein>
    <recommendedName>
        <fullName>Ras association domain-containing protein 3</fullName>
    </recommendedName>
</protein>
<sequence>MSSGYSSLEEDEDFFFTARTSFFRRAPPGKSRSGQPDVEKEKETHNYLSKEEIKEKVHKYNSAVTDKLKMTLNSNGIYTGFIKVQMELCKPAQPSPEPSSGGCMNTLHISSTNTVGEVIEALLRKFLVTESPTKFALYKRCHREDQVYACKLSDREHPLYLRLVAGPRTDTLSFVLREHEIGEWEAFSLPELQNFLRILDKEEDEQLQSLKRRYTAYRQKLEEALGEVWKPG</sequence>
<feature type="initiator methionine" description="Removed" evidence="2">
    <location>
        <position position="1"/>
    </location>
</feature>
<feature type="chain" id="PRO_0000240397" description="Ras association domain-containing protein 3">
    <location>
        <begin position="2"/>
        <end position="232"/>
    </location>
</feature>
<feature type="domain" description="Ras-associating" evidence="3">
    <location>
        <begin position="78"/>
        <end position="180"/>
    </location>
</feature>
<feature type="domain" description="SARAH" evidence="4">
    <location>
        <begin position="181"/>
        <end position="228"/>
    </location>
</feature>
<feature type="region of interest" description="Disordered" evidence="5">
    <location>
        <begin position="25"/>
        <end position="46"/>
    </location>
</feature>
<feature type="compositionally biased region" description="Basic and acidic residues" evidence="5">
    <location>
        <begin position="37"/>
        <end position="46"/>
    </location>
</feature>
<feature type="modified residue" description="N-acetylserine" evidence="2">
    <location>
        <position position="2"/>
    </location>
</feature>
<feature type="sequence conflict" description="In Ref. 2; BAE39678." evidence="6" ref="2">
    <original>N</original>
    <variation>D</variation>
    <location>
        <position position="113"/>
    </location>
</feature>
<gene>
    <name type="primary">Rassf3</name>
</gene>
<name>RASF3_MOUSE</name>
<keyword id="KW-0007">Acetylation</keyword>
<keyword id="KW-0963">Cytoplasm</keyword>
<keyword id="KW-0206">Cytoskeleton</keyword>
<keyword id="KW-0493">Microtubule</keyword>
<keyword id="KW-1185">Reference proteome</keyword>
<dbReference type="EMBL" id="AF332864">
    <property type="protein sequence ID" value="AAK06849.1"/>
    <property type="molecule type" value="mRNA"/>
</dbReference>
<dbReference type="EMBL" id="AK155495">
    <property type="protein sequence ID" value="BAE33293.1"/>
    <property type="molecule type" value="mRNA"/>
</dbReference>
<dbReference type="EMBL" id="AK167627">
    <property type="protein sequence ID" value="BAE39678.1"/>
    <property type="molecule type" value="mRNA"/>
</dbReference>
<dbReference type="EMBL" id="BC011511">
    <property type="protein sequence ID" value="AAH11511.1"/>
    <property type="molecule type" value="mRNA"/>
</dbReference>
<dbReference type="EMBL" id="BC055023">
    <property type="protein sequence ID" value="AAH55023.1"/>
    <property type="molecule type" value="mRNA"/>
</dbReference>
<dbReference type="EMBL" id="BC071204">
    <property type="protein sequence ID" value="AAH71204.1"/>
    <property type="molecule type" value="mRNA"/>
</dbReference>
<dbReference type="CCDS" id="CCDS24211.1"/>
<dbReference type="RefSeq" id="NP_620406.1">
    <property type="nucleotide sequence ID" value="NM_138956.4"/>
</dbReference>
<dbReference type="SMR" id="Q99P51"/>
<dbReference type="FunCoup" id="Q99P51">
    <property type="interactions" value="298"/>
</dbReference>
<dbReference type="STRING" id="10090.ENSMUSP00000026902"/>
<dbReference type="iPTMnet" id="Q99P51"/>
<dbReference type="PhosphoSitePlus" id="Q99P51"/>
<dbReference type="PaxDb" id="10090-ENSMUSP00000026902"/>
<dbReference type="ProteomicsDB" id="300355"/>
<dbReference type="Antibodypedia" id="29184">
    <property type="antibodies" value="185 antibodies from 31 providers"/>
</dbReference>
<dbReference type="DNASU" id="192678"/>
<dbReference type="Ensembl" id="ENSMUST00000026902.9">
    <property type="protein sequence ID" value="ENSMUSP00000026902.8"/>
    <property type="gene ID" value="ENSMUSG00000025795.9"/>
</dbReference>
<dbReference type="GeneID" id="192678"/>
<dbReference type="KEGG" id="mmu:192678"/>
<dbReference type="UCSC" id="uc007hfs.1">
    <property type="organism name" value="mouse"/>
</dbReference>
<dbReference type="AGR" id="MGI:2179722"/>
<dbReference type="CTD" id="283349"/>
<dbReference type="MGI" id="MGI:2179722">
    <property type="gene designation" value="Rassf3"/>
</dbReference>
<dbReference type="VEuPathDB" id="HostDB:ENSMUSG00000025795"/>
<dbReference type="eggNOG" id="KOG4239">
    <property type="taxonomic scope" value="Eukaryota"/>
</dbReference>
<dbReference type="GeneTree" id="ENSGT00940000157502"/>
<dbReference type="HOGENOM" id="CLU_045544_1_0_1"/>
<dbReference type="InParanoid" id="Q99P51"/>
<dbReference type="OMA" id="YCRDLVH"/>
<dbReference type="OrthoDB" id="74314at2759"/>
<dbReference type="PhylomeDB" id="Q99P51"/>
<dbReference type="TreeFam" id="TF319243"/>
<dbReference type="BioGRID-ORCS" id="192678">
    <property type="hits" value="1 hit in 75 CRISPR screens"/>
</dbReference>
<dbReference type="ChiTaRS" id="Rassf3">
    <property type="organism name" value="mouse"/>
</dbReference>
<dbReference type="PRO" id="PR:Q99P51"/>
<dbReference type="Proteomes" id="UP000000589">
    <property type="component" value="Chromosome 10"/>
</dbReference>
<dbReference type="RNAct" id="Q99P51">
    <property type="molecule type" value="protein"/>
</dbReference>
<dbReference type="Bgee" id="ENSMUSG00000025795">
    <property type="expression patterns" value="Expressed in ascending aorta and 216 other cell types or tissues"/>
</dbReference>
<dbReference type="GO" id="GO:0005829">
    <property type="term" value="C:cytosol"/>
    <property type="evidence" value="ECO:0007669"/>
    <property type="project" value="Ensembl"/>
</dbReference>
<dbReference type="GO" id="GO:0005874">
    <property type="term" value="C:microtubule"/>
    <property type="evidence" value="ECO:0007669"/>
    <property type="project" value="UniProtKB-KW"/>
</dbReference>
<dbReference type="GO" id="GO:0005886">
    <property type="term" value="C:plasma membrane"/>
    <property type="evidence" value="ECO:0007669"/>
    <property type="project" value="Ensembl"/>
</dbReference>
<dbReference type="GO" id="GO:0042802">
    <property type="term" value="F:identical protein binding"/>
    <property type="evidence" value="ECO:0007669"/>
    <property type="project" value="Ensembl"/>
</dbReference>
<dbReference type="GO" id="GO:0007165">
    <property type="term" value="P:signal transduction"/>
    <property type="evidence" value="ECO:0007669"/>
    <property type="project" value="InterPro"/>
</dbReference>
<dbReference type="CDD" id="cd21891">
    <property type="entry name" value="SARAH_RASSF3"/>
    <property type="match status" value="1"/>
</dbReference>
<dbReference type="FunFam" id="3.10.20.90:FF:000224">
    <property type="entry name" value="ras association domain-containing protein 3"/>
    <property type="match status" value="1"/>
</dbReference>
<dbReference type="Gene3D" id="1.20.5.110">
    <property type="match status" value="1"/>
</dbReference>
<dbReference type="Gene3D" id="3.10.20.90">
    <property type="entry name" value="Phosphatidylinositol 3-kinase Catalytic Subunit, Chain A, domain 1"/>
    <property type="match status" value="2"/>
</dbReference>
<dbReference type="InterPro" id="IPR000159">
    <property type="entry name" value="RA_dom"/>
</dbReference>
<dbReference type="InterPro" id="IPR033614">
    <property type="entry name" value="RASSF1-6"/>
</dbReference>
<dbReference type="InterPro" id="IPR011524">
    <property type="entry name" value="SARAH_dom"/>
</dbReference>
<dbReference type="InterPro" id="IPR029071">
    <property type="entry name" value="Ubiquitin-like_domsf"/>
</dbReference>
<dbReference type="PANTHER" id="PTHR22738:SF8">
    <property type="entry name" value="RAS ASSOCIATION DOMAIN-CONTAINING PROTEIN 3"/>
    <property type="match status" value="1"/>
</dbReference>
<dbReference type="PANTHER" id="PTHR22738">
    <property type="entry name" value="RASSF"/>
    <property type="match status" value="1"/>
</dbReference>
<dbReference type="Pfam" id="PF16517">
    <property type="entry name" value="Nore1-SARAH"/>
    <property type="match status" value="1"/>
</dbReference>
<dbReference type="Pfam" id="PF00788">
    <property type="entry name" value="RA"/>
    <property type="match status" value="1"/>
</dbReference>
<dbReference type="SMART" id="SM00314">
    <property type="entry name" value="RA"/>
    <property type="match status" value="1"/>
</dbReference>
<dbReference type="SUPFAM" id="SSF54236">
    <property type="entry name" value="Ubiquitin-like"/>
    <property type="match status" value="1"/>
</dbReference>
<dbReference type="PROSITE" id="PS50200">
    <property type="entry name" value="RA"/>
    <property type="match status" value="1"/>
</dbReference>
<dbReference type="PROSITE" id="PS50951">
    <property type="entry name" value="SARAH"/>
    <property type="match status" value="1"/>
</dbReference>
<accession>Q99P51</accession>
<accession>Q3TJ17</accession>
<evidence type="ECO:0000250" key="1"/>
<evidence type="ECO:0000250" key="2">
    <source>
        <dbReference type="UniProtKB" id="Q86WH2"/>
    </source>
</evidence>
<evidence type="ECO:0000255" key="3">
    <source>
        <dbReference type="PROSITE-ProRule" id="PRU00166"/>
    </source>
</evidence>
<evidence type="ECO:0000255" key="4">
    <source>
        <dbReference type="PROSITE-ProRule" id="PRU00310"/>
    </source>
</evidence>
<evidence type="ECO:0000256" key="5">
    <source>
        <dbReference type="SAM" id="MobiDB-lite"/>
    </source>
</evidence>
<evidence type="ECO:0000305" key="6"/>